<accession>Q9SV43</accession>
<name>PLP7_ARATH</name>
<comment type="function">
    <text evidence="6">Possesses non-specific lipolytic acyl hydrolase (LAH) activity. Catalyzes the hydrolysis of the galactolipids monogalactosyldiacylglycerol (MGDG) and digalactosyldiacylglycerol (DGDG), and the phoshpolipids phosphatidylcholine (PC), phosphatidylethanolamine (PE), phosphatidylglycerol (PG), phosphatidic acid (PA), phosphatidylserine (PS). Favors the release of fatty acid at the sn-2 position for PC. Possesses acyl-CoA thioesterase activity. Negatively affects disease resistance to the necrotic fungal pathogen Botrytis cinerea and the avirulent bacteria Pseudomonas syringae by promoting cell death and reducing the efficiency of the hypersensitive response, respectively. However, PLP2 contributes to resistance to cucumber mosaic virus (CMV), an obligate parasite inducing hypersensitive response. May negatively regulate oxylipin production, possibly via participating in membrane repair that includes removal of oxidatively modified lipids. Enzymatic products of PLP2 may influence cellulose content and cell elongation.</text>
</comment>
<comment type="subcellular location">
    <subcellularLocation>
        <location evidence="8">Cell membrane</location>
        <topology evidence="8">Peripheral membrane protein</topology>
    </subcellularLocation>
    <text>Associated with the plasma membrane.</text>
</comment>
<comment type="tissue specificity">
    <text evidence="6">Highly expressed in roots and at lower levels in leaves, stems, flowers and siliques.</text>
</comment>
<comment type="induction">
    <text evidence="5 6">By the fungal pathogen B.cinerea and an avirulent strain of P.syringae pv tomato.</text>
</comment>
<comment type="domain">
    <text evidence="1">The nitrogen atoms of the two glycine residues in the GGXR motif define the oxyanion hole, and stabilize the oxyanion that forms during the nucleophilic attack by the catalytic serine during substrate cleavage.</text>
</comment>
<comment type="disruption phenotype">
    <text evidence="6">Increased length of leaves, petioles, hypocotyls, primary roots and root hairs. Changes in lipid levels and composition.</text>
</comment>
<comment type="miscellaneous">
    <text evidence="8">Plants over-expressing PLP7 have decreased cellulose content and mechanical strength.</text>
</comment>
<comment type="similarity">
    <text evidence="7">Belongs to the patatin family.</text>
</comment>
<comment type="caution">
    <text evidence="7">Lacks the conserved Asp residue expected to act as the active site proton acceptor.</text>
</comment>
<protein>
    <recommendedName>
        <fullName>Patatin-like protein 7</fullName>
        <shortName>AtPLP7</shortName>
        <ecNumber>3.1.1.-</ecNumber>
    </recommendedName>
    <alternativeName>
        <fullName>Patatin-related phospholipase A IIIbeta</fullName>
        <shortName>pPLAIIIb</shortName>
    </alternativeName>
    <alternativeName>
        <fullName>Phospholipase A IIIA</fullName>
        <shortName>AtPLAIIIA</shortName>
    </alternativeName>
</protein>
<reference key="1">
    <citation type="journal article" date="2000" name="Nature">
        <title>Sequence and analysis of chromosome 3 of the plant Arabidopsis thaliana.</title>
        <authorList>
            <person name="Salanoubat M."/>
            <person name="Lemcke K."/>
            <person name="Rieger M."/>
            <person name="Ansorge W."/>
            <person name="Unseld M."/>
            <person name="Fartmann B."/>
            <person name="Valle G."/>
            <person name="Bloecker H."/>
            <person name="Perez-Alonso M."/>
            <person name="Obermaier B."/>
            <person name="Delseny M."/>
            <person name="Boutry M."/>
            <person name="Grivell L.A."/>
            <person name="Mache R."/>
            <person name="Puigdomenech P."/>
            <person name="De Simone V."/>
            <person name="Choisne N."/>
            <person name="Artiguenave F."/>
            <person name="Robert C."/>
            <person name="Brottier P."/>
            <person name="Wincker P."/>
            <person name="Cattolico L."/>
            <person name="Weissenbach J."/>
            <person name="Saurin W."/>
            <person name="Quetier F."/>
            <person name="Schaefer M."/>
            <person name="Mueller-Auer S."/>
            <person name="Gabel C."/>
            <person name="Fuchs M."/>
            <person name="Benes V."/>
            <person name="Wurmbach E."/>
            <person name="Drzonek H."/>
            <person name="Erfle H."/>
            <person name="Jordan N."/>
            <person name="Bangert S."/>
            <person name="Wiedelmann R."/>
            <person name="Kranz H."/>
            <person name="Voss H."/>
            <person name="Holland R."/>
            <person name="Brandt P."/>
            <person name="Nyakatura G."/>
            <person name="Vezzi A."/>
            <person name="D'Angelo M."/>
            <person name="Pallavicini A."/>
            <person name="Toppo S."/>
            <person name="Simionati B."/>
            <person name="Conrad A."/>
            <person name="Hornischer K."/>
            <person name="Kauer G."/>
            <person name="Loehnert T.-H."/>
            <person name="Nordsiek G."/>
            <person name="Reichelt J."/>
            <person name="Scharfe M."/>
            <person name="Schoen O."/>
            <person name="Bargues M."/>
            <person name="Terol J."/>
            <person name="Climent J."/>
            <person name="Navarro P."/>
            <person name="Collado C."/>
            <person name="Perez-Perez A."/>
            <person name="Ottenwaelder B."/>
            <person name="Duchemin D."/>
            <person name="Cooke R."/>
            <person name="Laudie M."/>
            <person name="Berger-Llauro C."/>
            <person name="Purnelle B."/>
            <person name="Masuy D."/>
            <person name="de Haan M."/>
            <person name="Maarse A.C."/>
            <person name="Alcaraz J.-P."/>
            <person name="Cottet A."/>
            <person name="Casacuberta E."/>
            <person name="Monfort A."/>
            <person name="Argiriou A."/>
            <person name="Flores M."/>
            <person name="Liguori R."/>
            <person name="Vitale D."/>
            <person name="Mannhaupt G."/>
            <person name="Haase D."/>
            <person name="Schoof H."/>
            <person name="Rudd S."/>
            <person name="Zaccaria P."/>
            <person name="Mewes H.-W."/>
            <person name="Mayer K.F.X."/>
            <person name="Kaul S."/>
            <person name="Town C.D."/>
            <person name="Koo H.L."/>
            <person name="Tallon L.J."/>
            <person name="Jenkins J."/>
            <person name="Rooney T."/>
            <person name="Rizzo M."/>
            <person name="Walts A."/>
            <person name="Utterback T."/>
            <person name="Fujii C.Y."/>
            <person name="Shea T.P."/>
            <person name="Creasy T.H."/>
            <person name="Haas B."/>
            <person name="Maiti R."/>
            <person name="Wu D."/>
            <person name="Peterson J."/>
            <person name="Van Aken S."/>
            <person name="Pai G."/>
            <person name="Militscher J."/>
            <person name="Sellers P."/>
            <person name="Gill J.E."/>
            <person name="Feldblyum T.V."/>
            <person name="Preuss D."/>
            <person name="Lin X."/>
            <person name="Nierman W.C."/>
            <person name="Salzberg S.L."/>
            <person name="White O."/>
            <person name="Venter J.C."/>
            <person name="Fraser C.M."/>
            <person name="Kaneko T."/>
            <person name="Nakamura Y."/>
            <person name="Sato S."/>
            <person name="Kato T."/>
            <person name="Asamizu E."/>
            <person name="Sasamoto S."/>
            <person name="Kimura T."/>
            <person name="Idesawa K."/>
            <person name="Kawashima K."/>
            <person name="Kishida Y."/>
            <person name="Kiyokawa C."/>
            <person name="Kohara M."/>
            <person name="Matsumoto M."/>
            <person name="Matsuno A."/>
            <person name="Muraki A."/>
            <person name="Nakayama S."/>
            <person name="Nakazaki N."/>
            <person name="Shinpo S."/>
            <person name="Takeuchi C."/>
            <person name="Wada T."/>
            <person name="Watanabe A."/>
            <person name="Yamada M."/>
            <person name="Yasuda M."/>
            <person name="Tabata S."/>
        </authorList>
    </citation>
    <scope>NUCLEOTIDE SEQUENCE [LARGE SCALE GENOMIC DNA]</scope>
    <source>
        <strain>cv. Columbia</strain>
    </source>
</reference>
<reference key="2">
    <citation type="journal article" date="2017" name="Plant J.">
        <title>Araport11: a complete reannotation of the Arabidopsis thaliana reference genome.</title>
        <authorList>
            <person name="Cheng C.Y."/>
            <person name="Krishnakumar V."/>
            <person name="Chan A.P."/>
            <person name="Thibaud-Nissen F."/>
            <person name="Schobel S."/>
            <person name="Town C.D."/>
        </authorList>
    </citation>
    <scope>GENOME REANNOTATION</scope>
    <source>
        <strain>cv. Columbia</strain>
    </source>
</reference>
<reference key="3">
    <citation type="submission" date="2006-07" db="EMBL/GenBank/DDBJ databases">
        <title>Large-scale analysis of RIKEN Arabidopsis full-length (RAFL) cDNAs.</title>
        <authorList>
            <person name="Totoki Y."/>
            <person name="Seki M."/>
            <person name="Ishida J."/>
            <person name="Nakajima M."/>
            <person name="Enju A."/>
            <person name="Kamiya A."/>
            <person name="Narusaka M."/>
            <person name="Shin-i T."/>
            <person name="Nakagawa M."/>
            <person name="Sakamoto N."/>
            <person name="Oishi K."/>
            <person name="Kohara Y."/>
            <person name="Kobayashi M."/>
            <person name="Toyoda A."/>
            <person name="Sakaki Y."/>
            <person name="Sakurai T."/>
            <person name="Iida K."/>
            <person name="Akiyama K."/>
            <person name="Satou M."/>
            <person name="Toyoda T."/>
            <person name="Konagaya A."/>
            <person name="Carninci P."/>
            <person name="Kawai J."/>
            <person name="Hayashizaki Y."/>
            <person name="Shinozaki K."/>
        </authorList>
    </citation>
    <scope>NUCLEOTIDE SEQUENCE [LARGE SCALE MRNA]</scope>
    <source>
        <strain>cv. Columbia</strain>
    </source>
</reference>
<reference key="4">
    <citation type="journal article" date="2005" name="Plant J.">
        <title>A pathogen-inducible patatin-like lipid acyl hydrolase facilitates fungal and bacterial host colonization in Arabidopsis.</title>
        <authorList>
            <person name="La Camera S."/>
            <person name="Geoffroy P."/>
            <person name="Samaha H."/>
            <person name="Ndiaye A."/>
            <person name="Rahim G."/>
            <person name="Legrand M."/>
            <person name="Heitz T."/>
        </authorList>
    </citation>
    <scope>INDUCTION</scope>
</reference>
<reference key="5">
    <citation type="journal article" date="2011" name="Plant Cell">
        <title>Patatin-related phospholipase pPLAIIIbeta-induced changes in lipid metabolism alter cellulose content and cell elongation in Arabidopsis.</title>
        <authorList>
            <person name="Li M."/>
            <person name="Bahn S.C."/>
            <person name="Guo L."/>
            <person name="Musgrave W."/>
            <person name="Berg H."/>
            <person name="Welti R."/>
            <person name="Wang X."/>
        </authorList>
    </citation>
    <scope>FUNCTION</scope>
    <scope>SUBCELLULAR LOCATION</scope>
    <scope>TISSUE SPECIFICITY</scope>
    <scope>INDUCTION</scope>
    <scope>DISRUPTION PHENOTYPE</scope>
</reference>
<gene>
    <name type="primary">PLP7</name>
    <name type="ordered locus">At3g54950</name>
    <name type="ORF">F28P10.70</name>
</gene>
<proteinExistence type="evidence at transcript level"/>
<evidence type="ECO:0000250" key="1"/>
<evidence type="ECO:0000255" key="2"/>
<evidence type="ECO:0000255" key="3">
    <source>
        <dbReference type="PROSITE-ProRule" id="PRU01161"/>
    </source>
</evidence>
<evidence type="ECO:0000256" key="4">
    <source>
        <dbReference type="SAM" id="MobiDB-lite"/>
    </source>
</evidence>
<evidence type="ECO:0000269" key="5">
    <source>
    </source>
</evidence>
<evidence type="ECO:0000269" key="6">
    <source>
    </source>
</evidence>
<evidence type="ECO:0000305" key="7"/>
<evidence type="ECO:0000305" key="8">
    <source>
    </source>
</evidence>
<dbReference type="EC" id="3.1.1.-"/>
<dbReference type="EMBL" id="AL049655">
    <property type="protein sequence ID" value="CAB41089.1"/>
    <property type="molecule type" value="Genomic_DNA"/>
</dbReference>
<dbReference type="EMBL" id="CP002686">
    <property type="protein sequence ID" value="AEE79317.1"/>
    <property type="molecule type" value="Genomic_DNA"/>
</dbReference>
<dbReference type="EMBL" id="AK229196">
    <property type="protein sequence ID" value="BAF01066.1"/>
    <property type="molecule type" value="mRNA"/>
</dbReference>
<dbReference type="PIR" id="T06725">
    <property type="entry name" value="T06725"/>
</dbReference>
<dbReference type="SMR" id="Q9SV43"/>
<dbReference type="FunCoup" id="Q9SV43">
    <property type="interactions" value="221"/>
</dbReference>
<dbReference type="STRING" id="3702.Q9SV43"/>
<dbReference type="GlyGen" id="Q9SV43">
    <property type="glycosylation" value="1 site"/>
</dbReference>
<dbReference type="PaxDb" id="3702-AT3G54950.1"/>
<dbReference type="ProteomicsDB" id="234971"/>
<dbReference type="EnsemblPlants" id="AT3G54950.1">
    <property type="protein sequence ID" value="AT3G54950.1"/>
    <property type="gene ID" value="AT3G54950"/>
</dbReference>
<dbReference type="GeneID" id="824660"/>
<dbReference type="Gramene" id="AT3G54950.1">
    <property type="protein sequence ID" value="AT3G54950.1"/>
    <property type="gene ID" value="AT3G54950"/>
</dbReference>
<dbReference type="KEGG" id="ath:AT3G54950"/>
<dbReference type="Araport" id="AT3G54950"/>
<dbReference type="TAIR" id="AT3G54950">
    <property type="gene designation" value="PPLAIIIBETA"/>
</dbReference>
<dbReference type="eggNOG" id="KOG0513">
    <property type="taxonomic scope" value="Eukaryota"/>
</dbReference>
<dbReference type="HOGENOM" id="CLU_000288_144_1_1"/>
<dbReference type="InParanoid" id="Q9SV43"/>
<dbReference type="OMA" id="KPNIDAD"/>
<dbReference type="PhylomeDB" id="Q9SV43"/>
<dbReference type="BRENDA" id="3.1.1.23">
    <property type="organism ID" value="399"/>
</dbReference>
<dbReference type="PRO" id="PR:Q9SV43"/>
<dbReference type="Proteomes" id="UP000006548">
    <property type="component" value="Chromosome 3"/>
</dbReference>
<dbReference type="ExpressionAtlas" id="Q9SV43">
    <property type="expression patterns" value="baseline and differential"/>
</dbReference>
<dbReference type="GO" id="GO:0005886">
    <property type="term" value="C:plasma membrane"/>
    <property type="evidence" value="ECO:0000314"/>
    <property type="project" value="TAIR"/>
</dbReference>
<dbReference type="GO" id="GO:0047617">
    <property type="term" value="F:fatty acyl-CoA hydrolase activity"/>
    <property type="evidence" value="ECO:0000314"/>
    <property type="project" value="TAIR"/>
</dbReference>
<dbReference type="GO" id="GO:0004620">
    <property type="term" value="F:phospholipase activity"/>
    <property type="evidence" value="ECO:0000314"/>
    <property type="project" value="TAIR"/>
</dbReference>
<dbReference type="GO" id="GO:0019374">
    <property type="term" value="P:galactolipid metabolic process"/>
    <property type="evidence" value="ECO:0000315"/>
    <property type="project" value="TAIR"/>
</dbReference>
<dbReference type="GO" id="GO:0016042">
    <property type="term" value="P:lipid catabolic process"/>
    <property type="evidence" value="ECO:0007669"/>
    <property type="project" value="UniProtKB-KW"/>
</dbReference>
<dbReference type="GO" id="GO:0006644">
    <property type="term" value="P:phospholipid metabolic process"/>
    <property type="evidence" value="ECO:0000315"/>
    <property type="project" value="TAIR"/>
</dbReference>
<dbReference type="GO" id="GO:0051707">
    <property type="term" value="P:response to other organism"/>
    <property type="evidence" value="ECO:0000270"/>
    <property type="project" value="TAIR"/>
</dbReference>
<dbReference type="CDD" id="cd07199">
    <property type="entry name" value="Pat17_PNPLA8_PNPLA9_like"/>
    <property type="match status" value="1"/>
</dbReference>
<dbReference type="FunFam" id="3.40.1090.10:FF:000034">
    <property type="entry name" value="Patatin"/>
    <property type="match status" value="1"/>
</dbReference>
<dbReference type="Gene3D" id="3.40.1090.10">
    <property type="entry name" value="Cytosolic phospholipase A2 catalytic domain"/>
    <property type="match status" value="1"/>
</dbReference>
<dbReference type="InterPro" id="IPR016035">
    <property type="entry name" value="Acyl_Trfase/lysoPLipase"/>
</dbReference>
<dbReference type="InterPro" id="IPR002641">
    <property type="entry name" value="PNPLA_dom"/>
</dbReference>
<dbReference type="PANTHER" id="PTHR32241">
    <property type="entry name" value="PATATIN-LIKE PROTEIN 6"/>
    <property type="match status" value="1"/>
</dbReference>
<dbReference type="PANTHER" id="PTHR32241:SF14">
    <property type="entry name" value="PATATIN-LIKE PROTEIN 7"/>
    <property type="match status" value="1"/>
</dbReference>
<dbReference type="Pfam" id="PF01734">
    <property type="entry name" value="Patatin"/>
    <property type="match status" value="1"/>
</dbReference>
<dbReference type="SUPFAM" id="SSF52151">
    <property type="entry name" value="FabD/lysophospholipase-like"/>
    <property type="match status" value="1"/>
</dbReference>
<dbReference type="PROSITE" id="PS51635">
    <property type="entry name" value="PNPLA"/>
    <property type="match status" value="1"/>
</dbReference>
<sequence>MHRVRNKPVKSTATASVKHLIKQRGGDGATAASKSANDYNNNDSLLTDMQEPSIDTDKLSYEIFSILESKFLFGYDDSKPEPANSVVAGSIKNQRGKICILSIDGGGMRGILPGKALAYLEHALKSKSGDPNARIADYFDVAAGSGIGGIYTAMLFGSRDGNRPIFKADDTWQFLTRNAKGLYGGAGILKRVLRTGSGCCSGTAKLKKVMKESFSELTLKDTLKPVLIPCYDLKSSGPFLFSRADALETDGYDFRLSEVCRATWAEPGVFEPVEMKSVDGQTKCVAVGGGLAMSNPTAAAITHVLHNKQEFPFVRGVEDLLVLSLGMGQLLDVSYEYDRIIKWKAKHWARPAALISNDGAADTVDQAVAMAFGHCRSSNYVRIQANGSNLGPWSPNMDTDPSGSNVNMLMGVAEEMLKQKNVESVLFGGKRIDEQSNFEKLDWLAGELVLEHQRRNSRIAPTVAFKQSVHRADQKTSDKDIGVTARER</sequence>
<organism>
    <name type="scientific">Arabidopsis thaliana</name>
    <name type="common">Mouse-ear cress</name>
    <dbReference type="NCBI Taxonomy" id="3702"/>
    <lineage>
        <taxon>Eukaryota</taxon>
        <taxon>Viridiplantae</taxon>
        <taxon>Streptophyta</taxon>
        <taxon>Embryophyta</taxon>
        <taxon>Tracheophyta</taxon>
        <taxon>Spermatophyta</taxon>
        <taxon>Magnoliopsida</taxon>
        <taxon>eudicotyledons</taxon>
        <taxon>Gunneridae</taxon>
        <taxon>Pentapetalae</taxon>
        <taxon>rosids</taxon>
        <taxon>malvids</taxon>
        <taxon>Brassicales</taxon>
        <taxon>Brassicaceae</taxon>
        <taxon>Camelineae</taxon>
        <taxon>Arabidopsis</taxon>
    </lineage>
</organism>
<feature type="chain" id="PRO_0000425819" description="Patatin-like protein 7">
    <location>
        <begin position="1"/>
        <end position="488"/>
    </location>
</feature>
<feature type="domain" description="PNPLA" evidence="3">
    <location>
        <begin position="101"/>
        <end position="301"/>
    </location>
</feature>
<feature type="region of interest" description="Disordered" evidence="4">
    <location>
        <begin position="23"/>
        <end position="49"/>
    </location>
</feature>
<feature type="short sequence motif" description="GXGXXG" evidence="3">
    <location>
        <begin position="105"/>
        <end position="110"/>
    </location>
</feature>
<feature type="compositionally biased region" description="Polar residues" evidence="4">
    <location>
        <begin position="32"/>
        <end position="47"/>
    </location>
</feature>
<feature type="active site" description="Nucleophile" evidence="2">
    <location>
        <position position="145"/>
    </location>
</feature>
<keyword id="KW-1003">Cell membrane</keyword>
<keyword id="KW-0341">Growth regulation</keyword>
<keyword id="KW-0378">Hydrolase</keyword>
<keyword id="KW-0442">Lipid degradation</keyword>
<keyword id="KW-0443">Lipid metabolism</keyword>
<keyword id="KW-0472">Membrane</keyword>
<keyword id="KW-1185">Reference proteome</keyword>